<keyword id="KW-1003">Cell membrane</keyword>
<keyword id="KW-0963">Cytoplasm</keyword>
<keyword id="KW-0406">Ion transport</keyword>
<keyword id="KW-0408">Iron</keyword>
<keyword id="KW-0410">Iron transport</keyword>
<keyword id="KW-0449">Lipoprotein</keyword>
<keyword id="KW-0472">Membrane</keyword>
<keyword id="KW-0564">Palmitate</keyword>
<keyword id="KW-0597">Phosphoprotein</keyword>
<keyword id="KW-1185">Reference proteome</keyword>
<keyword id="KW-0732">Signal</keyword>
<keyword id="KW-0813">Transport</keyword>
<gene>
    <name type="primary">yfiY</name>
    <name type="ordered locus">BSU08440</name>
</gene>
<feature type="signal peptide" evidence="1">
    <location>
        <begin position="1"/>
        <end position="20"/>
    </location>
</feature>
<feature type="chain" id="PRO_0000363828" description="Probable siderophore-binding lipoprotein YfiY">
    <location>
        <begin position="21"/>
        <end position="325"/>
    </location>
</feature>
<feature type="domain" description="Fe/B12 periplasmic-binding" evidence="2">
    <location>
        <begin position="56"/>
        <end position="325"/>
    </location>
</feature>
<feature type="modified residue" description="Phosphoserine" evidence="5">
    <location>
        <position position="290"/>
    </location>
</feature>
<feature type="modified residue" description="Phosphothreonine" evidence="5">
    <location>
        <position position="302"/>
    </location>
</feature>
<feature type="lipid moiety-binding region" description="N-palmitoyl cysteine" evidence="1">
    <location>
        <position position="21"/>
    </location>
</feature>
<feature type="lipid moiety-binding region" description="S-diacylglycerol cysteine" evidence="1">
    <location>
        <position position="21"/>
    </location>
</feature>
<protein>
    <recommendedName>
        <fullName>Probable siderophore-binding lipoprotein YfiY</fullName>
    </recommendedName>
</protein>
<dbReference type="EMBL" id="D85082">
    <property type="protein sequence ID" value="BAA24465.1"/>
    <property type="molecule type" value="Genomic_DNA"/>
</dbReference>
<dbReference type="EMBL" id="AL009126">
    <property type="protein sequence ID" value="CAB12673.1"/>
    <property type="molecule type" value="Genomic_DNA"/>
</dbReference>
<dbReference type="PIR" id="C69805">
    <property type="entry name" value="C69805"/>
</dbReference>
<dbReference type="RefSeq" id="WP_003242746.1">
    <property type="nucleotide sequence ID" value="NZ_OZ025638.1"/>
</dbReference>
<dbReference type="SMR" id="O31567"/>
<dbReference type="FunCoup" id="O31567">
    <property type="interactions" value="31"/>
</dbReference>
<dbReference type="STRING" id="224308.BSU08440"/>
<dbReference type="iPTMnet" id="O31567"/>
<dbReference type="jPOST" id="O31567"/>
<dbReference type="PaxDb" id="224308-BSU08440"/>
<dbReference type="DNASU" id="939206"/>
<dbReference type="EnsemblBacteria" id="CAB12673">
    <property type="protein sequence ID" value="CAB12673"/>
    <property type="gene ID" value="BSU_08440"/>
</dbReference>
<dbReference type="GeneID" id="939206"/>
<dbReference type="KEGG" id="bsu:BSU08440"/>
<dbReference type="PATRIC" id="fig|224308.179.peg.911"/>
<dbReference type="eggNOG" id="COG0614">
    <property type="taxonomic scope" value="Bacteria"/>
</dbReference>
<dbReference type="InParanoid" id="O31567"/>
<dbReference type="OrthoDB" id="9793175at2"/>
<dbReference type="PhylomeDB" id="O31567"/>
<dbReference type="BioCyc" id="BSUB:BSU08440-MONOMER"/>
<dbReference type="Proteomes" id="UP000001570">
    <property type="component" value="Chromosome"/>
</dbReference>
<dbReference type="GO" id="GO:0005737">
    <property type="term" value="C:cytoplasm"/>
    <property type="evidence" value="ECO:0007669"/>
    <property type="project" value="UniProtKB-SubCell"/>
</dbReference>
<dbReference type="GO" id="GO:0045121">
    <property type="term" value="C:membrane raft"/>
    <property type="evidence" value="ECO:0007669"/>
    <property type="project" value="UniProtKB-SubCell"/>
</dbReference>
<dbReference type="GO" id="GO:0030288">
    <property type="term" value="C:outer membrane-bounded periplasmic space"/>
    <property type="evidence" value="ECO:0000318"/>
    <property type="project" value="GO_Central"/>
</dbReference>
<dbReference type="GO" id="GO:0005886">
    <property type="term" value="C:plasma membrane"/>
    <property type="evidence" value="ECO:0007669"/>
    <property type="project" value="UniProtKB-SubCell"/>
</dbReference>
<dbReference type="GO" id="GO:1901678">
    <property type="term" value="P:iron coordination entity transport"/>
    <property type="evidence" value="ECO:0007669"/>
    <property type="project" value="UniProtKB-ARBA"/>
</dbReference>
<dbReference type="CDD" id="cd01146">
    <property type="entry name" value="FhuD"/>
    <property type="match status" value="1"/>
</dbReference>
<dbReference type="FunFam" id="3.40.50.1980:FF:000003">
    <property type="entry name" value="Iron ABC transporter substrate-binding protein"/>
    <property type="match status" value="1"/>
</dbReference>
<dbReference type="FunFam" id="3.40.50.1980:FF:000018">
    <property type="entry name" value="Iron(III) dicitrate-binding periplasmic protein"/>
    <property type="match status" value="1"/>
</dbReference>
<dbReference type="Gene3D" id="3.40.50.1980">
    <property type="entry name" value="Nitrogenase molybdenum iron protein domain"/>
    <property type="match status" value="2"/>
</dbReference>
<dbReference type="InterPro" id="IPR002491">
    <property type="entry name" value="ABC_transptr_periplasmic_BD"/>
</dbReference>
<dbReference type="InterPro" id="IPR051313">
    <property type="entry name" value="Bact_iron-sidero_bind"/>
</dbReference>
<dbReference type="PANTHER" id="PTHR30532">
    <property type="entry name" value="IRON III DICITRATE-BINDING PERIPLASMIC PROTEIN"/>
    <property type="match status" value="1"/>
</dbReference>
<dbReference type="PANTHER" id="PTHR30532:SF21">
    <property type="entry name" value="SIDEROPHORE-BINDING LIPOPROTEIN YFIY-RELATED"/>
    <property type="match status" value="1"/>
</dbReference>
<dbReference type="Pfam" id="PF01497">
    <property type="entry name" value="Peripla_BP_2"/>
    <property type="match status" value="1"/>
</dbReference>
<dbReference type="SUPFAM" id="SSF53807">
    <property type="entry name" value="Helical backbone' metal receptor"/>
    <property type="match status" value="1"/>
</dbReference>
<dbReference type="PROSITE" id="PS50983">
    <property type="entry name" value="FE_B12_PBP"/>
    <property type="match status" value="1"/>
</dbReference>
<dbReference type="PROSITE" id="PS51257">
    <property type="entry name" value="PROKAR_LIPOPROTEIN"/>
    <property type="match status" value="1"/>
</dbReference>
<comment type="function">
    <text evidence="8">Part of the ABC transporter complex YfiYZ/YfhA/YusV involved in import of the iron-hydroxamate siderophores schizokinen, arthrobactin and corprogen. Binds the siderophores and delivers them to the surface of YfiZ/YfhA (Probable).</text>
</comment>
<comment type="subunit">
    <text evidence="6 7">The complex is composed of one ATP-binding protein (YusV), two transmembrane proteins (YfiZ and YfhA) and a solute-binding protein (YfiY). Interacts with FloT (PubMed:23651456).</text>
</comment>
<comment type="subcellular location">
    <subcellularLocation>
        <location evidence="6 7">Cell membrane</location>
        <topology evidence="7">Lipid-anchor</topology>
    </subcellularLocation>
    <subcellularLocation>
        <location>Cytoplasm</location>
    </subcellularLocation>
    <subcellularLocation>
        <location evidence="6">Membrane raft</location>
        <topology>Lipid-anchor</topology>
    </subcellularLocation>
    <text evidence="6">Present in detergent-resistant membrane (DRM) fractions that may be equivalent to eukaryotic membrane rafts; these rafts include proteins involved in signaling, molecule trafficking and protein secretion.</text>
</comment>
<comment type="induction">
    <text evidence="3 4">Induced by iron starvation, repressed by fur.</text>
</comment>
<comment type="disruption phenotype">
    <text evidence="4">Strains lacking this gene show a reduction in growth stimulation by the iron-hydroxamate siderophores schizokinen and arthrobactin compared to wild-type.</text>
</comment>
<comment type="similarity">
    <text evidence="7">Belongs to the bacterial solute-binding protein 8 family.</text>
</comment>
<sequence>MKKHISMLFVFLMAVMVLSACNSSESSSNSEVSSSKTRTVKHAMGTSDNIPANPKRIVVLTNEGTEALLALGIKPVGAVKSWKGDPWYDYLKDDMKGVKNVGLETEPNVEAIAELKPDLIIGNKVRQEKIYDQLNAIAPTVFAESLAGNWKDNLTLYANAVNKADKGKEVIADFDKRVSDLKNKLGDQTNKTVSVVRFLSGESRIYYTDSFPGIILDQLGFKRPEKQVELFKKQKDQFTFSTDSKESIPDMDADVLFYFTYKADNAKENEKWANQWTSSSLWKNLKAVKSGNAHEVDDVVWTTAGGIKAANYLLDDIETYFLKTK</sequence>
<name>YFIY_BACSU</name>
<evidence type="ECO:0000255" key="1">
    <source>
        <dbReference type="PROSITE-ProRule" id="PRU00303"/>
    </source>
</evidence>
<evidence type="ECO:0000255" key="2">
    <source>
        <dbReference type="PROSITE-ProRule" id="PRU00344"/>
    </source>
</evidence>
<evidence type="ECO:0000269" key="3">
    <source>
    </source>
</evidence>
<evidence type="ECO:0000269" key="4">
    <source>
    </source>
</evidence>
<evidence type="ECO:0000269" key="5">
    <source>
    </source>
</evidence>
<evidence type="ECO:0000269" key="6">
    <source>
    </source>
</evidence>
<evidence type="ECO:0000305" key="7"/>
<evidence type="ECO:0000305" key="8">
    <source>
    </source>
</evidence>
<reference key="1">
    <citation type="journal article" date="1996" name="DNA Res.">
        <title>Cloning and sequencing of a 27.8-kb nucleotide sequence of the 79 degrees-81 degrees region of the Bacillus subtilis genome containing the sspE locus.</title>
        <authorList>
            <person name="Yamamoto H."/>
            <person name="Uchiyama S."/>
            <person name="Sekiguchi J."/>
        </authorList>
    </citation>
    <scope>NUCLEOTIDE SEQUENCE [GENOMIC DNA]</scope>
    <source>
        <strain>168</strain>
    </source>
</reference>
<reference key="2">
    <citation type="journal article" date="1997" name="Nature">
        <title>The complete genome sequence of the Gram-positive bacterium Bacillus subtilis.</title>
        <authorList>
            <person name="Kunst F."/>
            <person name="Ogasawara N."/>
            <person name="Moszer I."/>
            <person name="Albertini A.M."/>
            <person name="Alloni G."/>
            <person name="Azevedo V."/>
            <person name="Bertero M.G."/>
            <person name="Bessieres P."/>
            <person name="Bolotin A."/>
            <person name="Borchert S."/>
            <person name="Borriss R."/>
            <person name="Boursier L."/>
            <person name="Brans A."/>
            <person name="Braun M."/>
            <person name="Brignell S.C."/>
            <person name="Bron S."/>
            <person name="Brouillet S."/>
            <person name="Bruschi C.V."/>
            <person name="Caldwell B."/>
            <person name="Capuano V."/>
            <person name="Carter N.M."/>
            <person name="Choi S.-K."/>
            <person name="Codani J.-J."/>
            <person name="Connerton I.F."/>
            <person name="Cummings N.J."/>
            <person name="Daniel R.A."/>
            <person name="Denizot F."/>
            <person name="Devine K.M."/>
            <person name="Duesterhoeft A."/>
            <person name="Ehrlich S.D."/>
            <person name="Emmerson P.T."/>
            <person name="Entian K.-D."/>
            <person name="Errington J."/>
            <person name="Fabret C."/>
            <person name="Ferrari E."/>
            <person name="Foulger D."/>
            <person name="Fritz C."/>
            <person name="Fujita M."/>
            <person name="Fujita Y."/>
            <person name="Fuma S."/>
            <person name="Galizzi A."/>
            <person name="Galleron N."/>
            <person name="Ghim S.-Y."/>
            <person name="Glaser P."/>
            <person name="Goffeau A."/>
            <person name="Golightly E.J."/>
            <person name="Grandi G."/>
            <person name="Guiseppi G."/>
            <person name="Guy B.J."/>
            <person name="Haga K."/>
            <person name="Haiech J."/>
            <person name="Harwood C.R."/>
            <person name="Henaut A."/>
            <person name="Hilbert H."/>
            <person name="Holsappel S."/>
            <person name="Hosono S."/>
            <person name="Hullo M.-F."/>
            <person name="Itaya M."/>
            <person name="Jones L.-M."/>
            <person name="Joris B."/>
            <person name="Karamata D."/>
            <person name="Kasahara Y."/>
            <person name="Klaerr-Blanchard M."/>
            <person name="Klein C."/>
            <person name="Kobayashi Y."/>
            <person name="Koetter P."/>
            <person name="Koningstein G."/>
            <person name="Krogh S."/>
            <person name="Kumano M."/>
            <person name="Kurita K."/>
            <person name="Lapidus A."/>
            <person name="Lardinois S."/>
            <person name="Lauber J."/>
            <person name="Lazarevic V."/>
            <person name="Lee S.-M."/>
            <person name="Levine A."/>
            <person name="Liu H."/>
            <person name="Masuda S."/>
            <person name="Mauel C."/>
            <person name="Medigue C."/>
            <person name="Medina N."/>
            <person name="Mellado R.P."/>
            <person name="Mizuno M."/>
            <person name="Moestl D."/>
            <person name="Nakai S."/>
            <person name="Noback M."/>
            <person name="Noone D."/>
            <person name="O'Reilly M."/>
            <person name="Ogawa K."/>
            <person name="Ogiwara A."/>
            <person name="Oudega B."/>
            <person name="Park S.-H."/>
            <person name="Parro V."/>
            <person name="Pohl T.M."/>
            <person name="Portetelle D."/>
            <person name="Porwollik S."/>
            <person name="Prescott A.M."/>
            <person name="Presecan E."/>
            <person name="Pujic P."/>
            <person name="Purnelle B."/>
            <person name="Rapoport G."/>
            <person name="Rey M."/>
            <person name="Reynolds S."/>
            <person name="Rieger M."/>
            <person name="Rivolta C."/>
            <person name="Rocha E."/>
            <person name="Roche B."/>
            <person name="Rose M."/>
            <person name="Sadaie Y."/>
            <person name="Sato T."/>
            <person name="Scanlan E."/>
            <person name="Schleich S."/>
            <person name="Schroeter R."/>
            <person name="Scoffone F."/>
            <person name="Sekiguchi J."/>
            <person name="Sekowska A."/>
            <person name="Seror S.J."/>
            <person name="Serror P."/>
            <person name="Shin B.-S."/>
            <person name="Soldo B."/>
            <person name="Sorokin A."/>
            <person name="Tacconi E."/>
            <person name="Takagi T."/>
            <person name="Takahashi H."/>
            <person name="Takemaru K."/>
            <person name="Takeuchi M."/>
            <person name="Tamakoshi A."/>
            <person name="Tanaka T."/>
            <person name="Terpstra P."/>
            <person name="Tognoni A."/>
            <person name="Tosato V."/>
            <person name="Uchiyama S."/>
            <person name="Vandenbol M."/>
            <person name="Vannier F."/>
            <person name="Vassarotti A."/>
            <person name="Viari A."/>
            <person name="Wambutt R."/>
            <person name="Wedler E."/>
            <person name="Wedler H."/>
            <person name="Weitzenegger T."/>
            <person name="Winters P."/>
            <person name="Wipat A."/>
            <person name="Yamamoto H."/>
            <person name="Yamane K."/>
            <person name="Yasumoto K."/>
            <person name="Yata K."/>
            <person name="Yoshida K."/>
            <person name="Yoshikawa H.-F."/>
            <person name="Zumstein E."/>
            <person name="Yoshikawa H."/>
            <person name="Danchin A."/>
        </authorList>
    </citation>
    <scope>NUCLEOTIDE SEQUENCE [LARGE SCALE GENOMIC DNA]</scope>
    <source>
        <strain>168</strain>
    </source>
</reference>
<reference key="3">
    <citation type="journal article" date="2002" name="Mol. Microbiol.">
        <title>Global analysis of the Bacillus subtilis Fur regulon and the iron starvation stimulon.</title>
        <authorList>
            <person name="Baichoo N."/>
            <person name="Wang T."/>
            <person name="Ye R."/>
            <person name="Helmann J.D."/>
        </authorList>
    </citation>
    <scope>INDUCTION</scope>
    <source>
        <strain>168</strain>
    </source>
</reference>
<reference key="4">
    <citation type="journal article" date="2004" name="Electrophoresis">
        <title>Profiling and comprehensive expression analysis of ABC transporter solute-binding proteins of Bacillus subtilis membrane based on a proteomic approach.</title>
        <authorList>
            <person name="Bunai K."/>
            <person name="Ariga M."/>
            <person name="Inoue T."/>
            <person name="Nozaki M."/>
            <person name="Ogane S."/>
            <person name="Kakeshita H."/>
            <person name="Nemoto T."/>
            <person name="Nakanishi H."/>
            <person name="Yamane K."/>
        </authorList>
    </citation>
    <scope>SUBCELLULAR LOCATION</scope>
    <source>
        <strain>168</strain>
    </source>
</reference>
<reference key="5">
    <citation type="journal article" date="2006" name="J. Bacteriol.">
        <title>Role of the Fur regulon in iron transport in Bacillus subtilis.</title>
        <authorList>
            <person name="Ollinger J."/>
            <person name="Song K.-B."/>
            <person name="Antelmann H."/>
            <person name="Hecker M."/>
            <person name="Helmann J.D."/>
        </authorList>
    </citation>
    <scope>FUNCTION</scope>
    <scope>SUBCELLULAR LOCATION</scope>
    <scope>POSSIBLE SUBUNIT</scope>
    <scope>DISRUPTION PHENOTYPE</scope>
    <scope>INDUCTION</scope>
    <source>
        <strain>168</strain>
    </source>
</reference>
<reference key="6">
    <citation type="journal article" date="2007" name="Mol. Cell. Proteomics">
        <title>The serine/threonine/tyrosine phosphoproteome of the model bacterium Bacillus subtilis.</title>
        <authorList>
            <person name="Macek B."/>
            <person name="Mijakovic I."/>
            <person name="Olsen J.V."/>
            <person name="Gnad F."/>
            <person name="Kumar C."/>
            <person name="Jensen P.R."/>
            <person name="Mann M."/>
        </authorList>
    </citation>
    <scope>PHOSPHORYLATION [LARGE SCALE ANALYSIS] AT SER-290 AND THR-302</scope>
    <scope>IDENTIFICATION BY MASS SPECTROMETRY</scope>
    <source>
        <strain>168</strain>
    </source>
</reference>
<reference key="7">
    <citation type="journal article" date="2013" name="Mol. Microbiol.">
        <title>Flotillins functionally organize the bacterial membrane.</title>
        <authorList>
            <person name="Bach J.N."/>
            <person name="Bramkamp M."/>
        </authorList>
    </citation>
    <scope>INTERACTION WITH FLOT</scope>
    <scope>SUBCELLULAR LOCATION</scope>
    <source>
        <strain>168</strain>
    </source>
</reference>
<proteinExistence type="evidence at protein level"/>
<accession>O31567</accession>
<accession>Q79EW3</accession>
<organism>
    <name type="scientific">Bacillus subtilis (strain 168)</name>
    <dbReference type="NCBI Taxonomy" id="224308"/>
    <lineage>
        <taxon>Bacteria</taxon>
        <taxon>Bacillati</taxon>
        <taxon>Bacillota</taxon>
        <taxon>Bacilli</taxon>
        <taxon>Bacillales</taxon>
        <taxon>Bacillaceae</taxon>
        <taxon>Bacillus</taxon>
    </lineage>
</organism>